<gene>
    <name type="primary">melk</name>
</gene>
<name>MELK_DANRE</name>
<dbReference type="EC" id="2.7.11.1"/>
<dbReference type="EMBL" id="AB108827">
    <property type="protein sequence ID" value="BAC75706.1"/>
    <property type="molecule type" value="mRNA"/>
</dbReference>
<dbReference type="EMBL" id="CU929184">
    <property type="status" value="NOT_ANNOTATED_CDS"/>
    <property type="molecule type" value="Genomic_DNA"/>
</dbReference>
<dbReference type="EMBL" id="FP017148">
    <property type="status" value="NOT_ANNOTATED_CDS"/>
    <property type="molecule type" value="Genomic_DNA"/>
</dbReference>
<dbReference type="EMBL" id="BC050520">
    <property type="protein sequence ID" value="AAH50520.1"/>
    <property type="molecule type" value="mRNA"/>
</dbReference>
<dbReference type="RefSeq" id="NP_996771.2">
    <property type="nucleotide sequence ID" value="NM_206888.2"/>
</dbReference>
<dbReference type="SMR" id="F1QGZ6"/>
<dbReference type="FunCoup" id="F1QGZ6">
    <property type="interactions" value="834"/>
</dbReference>
<dbReference type="STRING" id="7955.ENSDARP00000047727"/>
<dbReference type="PaxDb" id="7955-ENSDARP00000109117"/>
<dbReference type="Ensembl" id="ENSDART00000047728">
    <property type="protein sequence ID" value="ENSDARP00000047727"/>
    <property type="gene ID" value="ENSDARG00000030759"/>
</dbReference>
<dbReference type="GeneID" id="30724"/>
<dbReference type="KEGG" id="dre:30724"/>
<dbReference type="AGR" id="ZFIN:ZDB-GENE-990603-5"/>
<dbReference type="CTD" id="9833"/>
<dbReference type="ZFIN" id="ZDB-GENE-990603-5">
    <property type="gene designation" value="melk"/>
</dbReference>
<dbReference type="eggNOG" id="KOG0583">
    <property type="taxonomic scope" value="Eukaryota"/>
</dbReference>
<dbReference type="HOGENOM" id="CLU_000288_157_8_1"/>
<dbReference type="InParanoid" id="F1QGZ6"/>
<dbReference type="OMA" id="NVCTPKS"/>
<dbReference type="OrthoDB" id="193931at2759"/>
<dbReference type="PhylomeDB" id="F1QGZ6"/>
<dbReference type="TreeFam" id="TF314032"/>
<dbReference type="PRO" id="PR:F1QGZ6"/>
<dbReference type="Proteomes" id="UP000000437">
    <property type="component" value="Chromosome 1"/>
</dbReference>
<dbReference type="Bgee" id="ENSDARG00000030759">
    <property type="expression patterns" value="Expressed in mature ovarian follicle and 34 other cell types or tissues"/>
</dbReference>
<dbReference type="GO" id="GO:0005938">
    <property type="term" value="C:cell cortex"/>
    <property type="evidence" value="ECO:0000250"/>
    <property type="project" value="UniProtKB"/>
</dbReference>
<dbReference type="GO" id="GO:0005886">
    <property type="term" value="C:plasma membrane"/>
    <property type="evidence" value="ECO:0007669"/>
    <property type="project" value="UniProtKB-SubCell"/>
</dbReference>
<dbReference type="GO" id="GO:0005524">
    <property type="term" value="F:ATP binding"/>
    <property type="evidence" value="ECO:0007669"/>
    <property type="project" value="UniProtKB-KW"/>
</dbReference>
<dbReference type="GO" id="GO:0005509">
    <property type="term" value="F:calcium ion binding"/>
    <property type="evidence" value="ECO:0000250"/>
    <property type="project" value="UniProtKB"/>
</dbReference>
<dbReference type="GO" id="GO:0008289">
    <property type="term" value="F:lipid binding"/>
    <property type="evidence" value="ECO:0007669"/>
    <property type="project" value="UniProtKB-KW"/>
</dbReference>
<dbReference type="GO" id="GO:0004715">
    <property type="term" value="F:non-membrane spanning protein tyrosine kinase activity"/>
    <property type="evidence" value="ECO:0000250"/>
    <property type="project" value="UniProtKB"/>
</dbReference>
<dbReference type="GO" id="GO:0106310">
    <property type="term" value="F:protein serine kinase activity"/>
    <property type="evidence" value="ECO:0007669"/>
    <property type="project" value="RHEA"/>
</dbReference>
<dbReference type="GO" id="GO:0004674">
    <property type="term" value="F:protein serine/threonine kinase activity"/>
    <property type="evidence" value="ECO:0000250"/>
    <property type="project" value="UniProtKB"/>
</dbReference>
<dbReference type="GO" id="GO:0006915">
    <property type="term" value="P:apoptotic process"/>
    <property type="evidence" value="ECO:0000250"/>
    <property type="project" value="UniProtKB"/>
</dbReference>
<dbReference type="GO" id="GO:0008283">
    <property type="term" value="P:cell population proliferation"/>
    <property type="evidence" value="ECO:0000250"/>
    <property type="project" value="UniProtKB"/>
</dbReference>
<dbReference type="GO" id="GO:0048821">
    <property type="term" value="P:erythrocyte development"/>
    <property type="evidence" value="ECO:0000315"/>
    <property type="project" value="ZFIN"/>
</dbReference>
<dbReference type="GO" id="GO:0030097">
    <property type="term" value="P:hemopoiesis"/>
    <property type="evidence" value="ECO:0000315"/>
    <property type="project" value="UniProtKB"/>
</dbReference>
<dbReference type="GO" id="GO:0061351">
    <property type="term" value="P:neural precursor cell proliferation"/>
    <property type="evidence" value="ECO:0000250"/>
    <property type="project" value="UniProtKB"/>
</dbReference>
<dbReference type="GO" id="GO:0043065">
    <property type="term" value="P:positive regulation of apoptotic process"/>
    <property type="evidence" value="ECO:0000250"/>
    <property type="project" value="UniProtKB"/>
</dbReference>
<dbReference type="GO" id="GO:0046777">
    <property type="term" value="P:protein autophosphorylation"/>
    <property type="evidence" value="ECO:0000250"/>
    <property type="project" value="UniProtKB"/>
</dbReference>
<dbReference type="GO" id="GO:0008016">
    <property type="term" value="P:regulation of heart contraction"/>
    <property type="evidence" value="ECO:0000315"/>
    <property type="project" value="ZFIN"/>
</dbReference>
<dbReference type="CDD" id="cd12198">
    <property type="entry name" value="MELK_C"/>
    <property type="match status" value="1"/>
</dbReference>
<dbReference type="CDD" id="cd14078">
    <property type="entry name" value="STKc_MELK"/>
    <property type="match status" value="1"/>
</dbReference>
<dbReference type="CDD" id="cd14341">
    <property type="entry name" value="UBA_MELK"/>
    <property type="match status" value="1"/>
</dbReference>
<dbReference type="FunFam" id="1.10.510.10:FF:000901">
    <property type="entry name" value="Maternal embryonic leucine zipper kinase"/>
    <property type="match status" value="1"/>
</dbReference>
<dbReference type="FunFam" id="3.30.200.20:FF:000003">
    <property type="entry name" value="Non-specific serine/threonine protein kinase"/>
    <property type="match status" value="1"/>
</dbReference>
<dbReference type="FunFam" id="3.30.310.80:FF:000004">
    <property type="entry name" value="Non-specific serine/threonine protein kinase"/>
    <property type="match status" value="1"/>
</dbReference>
<dbReference type="Gene3D" id="3.30.310.80">
    <property type="entry name" value="Kinase associated domain 1, KA1"/>
    <property type="match status" value="1"/>
</dbReference>
<dbReference type="Gene3D" id="1.10.510.10">
    <property type="entry name" value="Transferase(Phosphotransferase) domain 1"/>
    <property type="match status" value="1"/>
</dbReference>
<dbReference type="InterPro" id="IPR028375">
    <property type="entry name" value="KA1/Ssp2_C"/>
</dbReference>
<dbReference type="InterPro" id="IPR001772">
    <property type="entry name" value="KA1_dom"/>
</dbReference>
<dbReference type="InterPro" id="IPR011009">
    <property type="entry name" value="Kinase-like_dom_sf"/>
</dbReference>
<dbReference type="InterPro" id="IPR034673">
    <property type="entry name" value="MELK"/>
</dbReference>
<dbReference type="InterPro" id="IPR048637">
    <property type="entry name" value="MELK_UBA"/>
</dbReference>
<dbReference type="InterPro" id="IPR000719">
    <property type="entry name" value="Prot_kinase_dom"/>
</dbReference>
<dbReference type="InterPro" id="IPR017441">
    <property type="entry name" value="Protein_kinase_ATP_BS"/>
</dbReference>
<dbReference type="InterPro" id="IPR008271">
    <property type="entry name" value="Ser/Thr_kinase_AS"/>
</dbReference>
<dbReference type="PANTHER" id="PTHR24346">
    <property type="entry name" value="MAP/MICROTUBULE AFFINITY-REGULATING KINASE"/>
    <property type="match status" value="1"/>
</dbReference>
<dbReference type="PANTHER" id="PTHR24346:SF30">
    <property type="entry name" value="MATERNAL EMBRYONIC LEUCINE ZIPPER KINASE"/>
    <property type="match status" value="1"/>
</dbReference>
<dbReference type="Pfam" id="PF02149">
    <property type="entry name" value="KA1"/>
    <property type="match status" value="1"/>
</dbReference>
<dbReference type="Pfam" id="PF00069">
    <property type="entry name" value="Pkinase"/>
    <property type="match status" value="1"/>
</dbReference>
<dbReference type="Pfam" id="PF21594">
    <property type="entry name" value="UBA_MELK"/>
    <property type="match status" value="1"/>
</dbReference>
<dbReference type="SMART" id="SM00220">
    <property type="entry name" value="S_TKc"/>
    <property type="match status" value="1"/>
</dbReference>
<dbReference type="SUPFAM" id="SSF103243">
    <property type="entry name" value="KA1-like"/>
    <property type="match status" value="1"/>
</dbReference>
<dbReference type="SUPFAM" id="SSF56112">
    <property type="entry name" value="Protein kinase-like (PK-like)"/>
    <property type="match status" value="1"/>
</dbReference>
<dbReference type="PROSITE" id="PS50032">
    <property type="entry name" value="KA1"/>
    <property type="match status" value="1"/>
</dbReference>
<dbReference type="PROSITE" id="PS00107">
    <property type="entry name" value="PROTEIN_KINASE_ATP"/>
    <property type="match status" value="1"/>
</dbReference>
<dbReference type="PROSITE" id="PS50011">
    <property type="entry name" value="PROTEIN_KINASE_DOM"/>
    <property type="match status" value="1"/>
</dbReference>
<dbReference type="PROSITE" id="PS00108">
    <property type="entry name" value="PROTEIN_KINASE_ST"/>
    <property type="match status" value="1"/>
</dbReference>
<sequence length="676" mass="76805">MPVDSTSELLKHYEVYETIGSGGFAKVKLGRHKLTGEKVAIKIMEKKDLGDDLPRVKIEIEAMKNLSHQHVCRLYHVIETTSKIYMVLEYCPGGELFDYIIAKDRLSEEETRVFFRQIISALAYVHSQGYAHRDLKPENLLIDEDHNLKLIDFGLCAKPKGGLGFELLTCCGSPAYAAPELIQGKAYIGSEADVWSMGVLLYALLCGFLPFDDDNCMVLYRKITRGKYSNPHWLSPSSILLLNQMMQVDPKRRLTVKHLLDHPWVMRGYSTPVEWHSKYPLGHIDEDCITEMAVTFKQSKQRTIQLVSEWKYDQITATYLLLLAKKRQGRPVRLRAECPVIDIVCSPLQDMQLKKSLRFTEDDDGVHPVVLGSMVFPPDCYDDENPWTPLTPKNTHTTNTPRMKLYPETTEKWNEMAYSPVIEHSRPCRQKPERRERTKENKENLAVPGTDGDVFALPAPRTPTSSRKVKSNRTVMTTPNHNNNKSSEVNKGAGSATKEGSRRREVEQQQNGQQGELNILAFSPERRSRSLDLAGCQVDSGQKRKGGKVFGSLERGLDKVITMLTPSKKRGPRDGPRKIKAQYNVTLTNQTNADQVLNQILSILPEKNVDFVQKGYTLKCHTQSDFGKVTMQFELEVCLLQKPEVVGIRRQRLKGDAWVYKHLVEDILSSSSQWSA</sequence>
<evidence type="ECO:0000250" key="1"/>
<evidence type="ECO:0000255" key="2">
    <source>
        <dbReference type="PROSITE-ProRule" id="PRU00159"/>
    </source>
</evidence>
<evidence type="ECO:0000255" key="3">
    <source>
        <dbReference type="PROSITE-ProRule" id="PRU00565"/>
    </source>
</evidence>
<evidence type="ECO:0000255" key="4">
    <source>
        <dbReference type="PROSITE-ProRule" id="PRU10027"/>
    </source>
</evidence>
<evidence type="ECO:0000256" key="5">
    <source>
        <dbReference type="SAM" id="MobiDB-lite"/>
    </source>
</evidence>
<evidence type="ECO:0000269" key="6">
    <source>
    </source>
</evidence>
<evidence type="ECO:0000305" key="7"/>
<protein>
    <recommendedName>
        <fullName>Maternal embryonic leucine zipper kinase</fullName>
        <shortName>zMelk</shortName>
        <ecNumber>2.7.11.1</ecNumber>
    </recommendedName>
    <alternativeName>
        <fullName>Protein kinase PK38</fullName>
    </alternativeName>
</protein>
<accession>F1QGZ6</accession>
<accession>Q7ZU72</accession>
<accession>Q7ZZN5</accession>
<organism>
    <name type="scientific">Danio rerio</name>
    <name type="common">Zebrafish</name>
    <name type="synonym">Brachydanio rerio</name>
    <dbReference type="NCBI Taxonomy" id="7955"/>
    <lineage>
        <taxon>Eukaryota</taxon>
        <taxon>Metazoa</taxon>
        <taxon>Chordata</taxon>
        <taxon>Craniata</taxon>
        <taxon>Vertebrata</taxon>
        <taxon>Euteleostomi</taxon>
        <taxon>Actinopterygii</taxon>
        <taxon>Neopterygii</taxon>
        <taxon>Teleostei</taxon>
        <taxon>Ostariophysi</taxon>
        <taxon>Cypriniformes</taxon>
        <taxon>Danionidae</taxon>
        <taxon>Danioninae</taxon>
        <taxon>Danio</taxon>
    </lineage>
</organism>
<reference key="1">
    <citation type="journal article" date="2005" name="Mol. Cell. Biol.">
        <title>Melk-like kinase plays a role in hematopoiesis in the zebra fish.</title>
        <authorList>
            <person name="Saito R."/>
            <person name="Tabata Y."/>
            <person name="Muto A."/>
            <person name="Arai K."/>
            <person name="Watanabe S."/>
        </authorList>
    </citation>
    <scope>NUCLEOTIDE SEQUENCE [MRNA]</scope>
    <scope>FUNCTION</scope>
    <scope>TISSUE SPECIFICITY</scope>
</reference>
<reference key="2">
    <citation type="journal article" date="2013" name="Nature">
        <title>The zebrafish reference genome sequence and its relationship to the human genome.</title>
        <authorList>
            <person name="Howe K."/>
            <person name="Clark M.D."/>
            <person name="Torroja C.F."/>
            <person name="Torrance J."/>
            <person name="Berthelot C."/>
            <person name="Muffato M."/>
            <person name="Collins J.E."/>
            <person name="Humphray S."/>
            <person name="McLaren K."/>
            <person name="Matthews L."/>
            <person name="McLaren S."/>
            <person name="Sealy I."/>
            <person name="Caccamo M."/>
            <person name="Churcher C."/>
            <person name="Scott C."/>
            <person name="Barrett J.C."/>
            <person name="Koch R."/>
            <person name="Rauch G.J."/>
            <person name="White S."/>
            <person name="Chow W."/>
            <person name="Kilian B."/>
            <person name="Quintais L.T."/>
            <person name="Guerra-Assuncao J.A."/>
            <person name="Zhou Y."/>
            <person name="Gu Y."/>
            <person name="Yen J."/>
            <person name="Vogel J.H."/>
            <person name="Eyre T."/>
            <person name="Redmond S."/>
            <person name="Banerjee R."/>
            <person name="Chi J."/>
            <person name="Fu B."/>
            <person name="Langley E."/>
            <person name="Maguire S.F."/>
            <person name="Laird G.K."/>
            <person name="Lloyd D."/>
            <person name="Kenyon E."/>
            <person name="Donaldson S."/>
            <person name="Sehra H."/>
            <person name="Almeida-King J."/>
            <person name="Loveland J."/>
            <person name="Trevanion S."/>
            <person name="Jones M."/>
            <person name="Quail M."/>
            <person name="Willey D."/>
            <person name="Hunt A."/>
            <person name="Burton J."/>
            <person name="Sims S."/>
            <person name="McLay K."/>
            <person name="Plumb B."/>
            <person name="Davis J."/>
            <person name="Clee C."/>
            <person name="Oliver K."/>
            <person name="Clark R."/>
            <person name="Riddle C."/>
            <person name="Elliot D."/>
            <person name="Threadgold G."/>
            <person name="Harden G."/>
            <person name="Ware D."/>
            <person name="Begum S."/>
            <person name="Mortimore B."/>
            <person name="Kerry G."/>
            <person name="Heath P."/>
            <person name="Phillimore B."/>
            <person name="Tracey A."/>
            <person name="Corby N."/>
            <person name="Dunn M."/>
            <person name="Johnson C."/>
            <person name="Wood J."/>
            <person name="Clark S."/>
            <person name="Pelan S."/>
            <person name="Griffiths G."/>
            <person name="Smith M."/>
            <person name="Glithero R."/>
            <person name="Howden P."/>
            <person name="Barker N."/>
            <person name="Lloyd C."/>
            <person name="Stevens C."/>
            <person name="Harley J."/>
            <person name="Holt K."/>
            <person name="Panagiotidis G."/>
            <person name="Lovell J."/>
            <person name="Beasley H."/>
            <person name="Henderson C."/>
            <person name="Gordon D."/>
            <person name="Auger K."/>
            <person name="Wright D."/>
            <person name="Collins J."/>
            <person name="Raisen C."/>
            <person name="Dyer L."/>
            <person name="Leung K."/>
            <person name="Robertson L."/>
            <person name="Ambridge K."/>
            <person name="Leongamornlert D."/>
            <person name="McGuire S."/>
            <person name="Gilderthorp R."/>
            <person name="Griffiths C."/>
            <person name="Manthravadi D."/>
            <person name="Nichol S."/>
            <person name="Barker G."/>
            <person name="Whitehead S."/>
            <person name="Kay M."/>
            <person name="Brown J."/>
            <person name="Murnane C."/>
            <person name="Gray E."/>
            <person name="Humphries M."/>
            <person name="Sycamore N."/>
            <person name="Barker D."/>
            <person name="Saunders D."/>
            <person name="Wallis J."/>
            <person name="Babbage A."/>
            <person name="Hammond S."/>
            <person name="Mashreghi-Mohammadi M."/>
            <person name="Barr L."/>
            <person name="Martin S."/>
            <person name="Wray P."/>
            <person name="Ellington A."/>
            <person name="Matthews N."/>
            <person name="Ellwood M."/>
            <person name="Woodmansey R."/>
            <person name="Clark G."/>
            <person name="Cooper J."/>
            <person name="Tromans A."/>
            <person name="Grafham D."/>
            <person name="Skuce C."/>
            <person name="Pandian R."/>
            <person name="Andrews R."/>
            <person name="Harrison E."/>
            <person name="Kimberley A."/>
            <person name="Garnett J."/>
            <person name="Fosker N."/>
            <person name="Hall R."/>
            <person name="Garner P."/>
            <person name="Kelly D."/>
            <person name="Bird C."/>
            <person name="Palmer S."/>
            <person name="Gehring I."/>
            <person name="Berger A."/>
            <person name="Dooley C.M."/>
            <person name="Ersan-Urun Z."/>
            <person name="Eser C."/>
            <person name="Geiger H."/>
            <person name="Geisler M."/>
            <person name="Karotki L."/>
            <person name="Kirn A."/>
            <person name="Konantz J."/>
            <person name="Konantz M."/>
            <person name="Oberlander M."/>
            <person name="Rudolph-Geiger S."/>
            <person name="Teucke M."/>
            <person name="Lanz C."/>
            <person name="Raddatz G."/>
            <person name="Osoegawa K."/>
            <person name="Zhu B."/>
            <person name="Rapp A."/>
            <person name="Widaa S."/>
            <person name="Langford C."/>
            <person name="Yang F."/>
            <person name="Schuster S.C."/>
            <person name="Carter N.P."/>
            <person name="Harrow J."/>
            <person name="Ning Z."/>
            <person name="Herrero J."/>
            <person name="Searle S.M."/>
            <person name="Enright A."/>
            <person name="Geisler R."/>
            <person name="Plasterk R.H."/>
            <person name="Lee C."/>
            <person name="Westerfield M."/>
            <person name="de Jong P.J."/>
            <person name="Zon L.I."/>
            <person name="Postlethwait J.H."/>
            <person name="Nusslein-Volhard C."/>
            <person name="Hubbard T.J."/>
            <person name="Roest Crollius H."/>
            <person name="Rogers J."/>
            <person name="Stemple D.L."/>
        </authorList>
    </citation>
    <scope>NUCLEOTIDE SEQUENCE [LARGE SCALE GENOMIC DNA]</scope>
    <source>
        <strain>Tuebingen</strain>
    </source>
</reference>
<reference key="3">
    <citation type="submission" date="2003-04" db="EMBL/GenBank/DDBJ databases">
        <authorList>
            <consortium name="NIH - Zebrafish Gene Collection (ZGC) project"/>
        </authorList>
    </citation>
    <scope>NUCLEOTIDE SEQUENCE [LARGE SCALE MRNA]</scope>
</reference>
<feature type="chain" id="PRO_0000413429" description="Maternal embryonic leucine zipper kinase">
    <location>
        <begin position="1"/>
        <end position="676"/>
    </location>
</feature>
<feature type="domain" description="Protein kinase" evidence="2">
    <location>
        <begin position="13"/>
        <end position="265"/>
    </location>
</feature>
<feature type="domain" description="KA1" evidence="3">
    <location>
        <begin position="624"/>
        <end position="673"/>
    </location>
</feature>
<feature type="region of interest" description="UBA-like" evidence="1">
    <location>
        <begin position="284"/>
        <end position="323"/>
    </location>
</feature>
<feature type="region of interest" description="Autoinhibitory region" evidence="1">
    <location>
        <begin position="328"/>
        <end position="673"/>
    </location>
</feature>
<feature type="region of interest" description="Disordered" evidence="5">
    <location>
        <begin position="423"/>
        <end position="518"/>
    </location>
</feature>
<feature type="compositionally biased region" description="Basic and acidic residues" evidence="5">
    <location>
        <begin position="423"/>
        <end position="443"/>
    </location>
</feature>
<feature type="compositionally biased region" description="Polar residues" evidence="5">
    <location>
        <begin position="462"/>
        <end position="489"/>
    </location>
</feature>
<feature type="compositionally biased region" description="Low complexity" evidence="5">
    <location>
        <begin position="508"/>
        <end position="518"/>
    </location>
</feature>
<feature type="active site" description="Proton acceptor" evidence="2 4">
    <location>
        <position position="134"/>
    </location>
</feature>
<feature type="binding site" evidence="2">
    <location>
        <begin position="19"/>
        <end position="27"/>
    </location>
    <ligand>
        <name>ATP</name>
        <dbReference type="ChEBI" id="CHEBI:30616"/>
    </ligand>
</feature>
<feature type="binding site" evidence="2">
    <location>
        <position position="42"/>
    </location>
    <ligand>
        <name>ATP</name>
        <dbReference type="ChEBI" id="CHEBI:30616"/>
    </ligand>
</feature>
<feature type="modified residue" description="Phosphothreonine; by autocatalysis" evidence="1">
    <location>
        <position position="169"/>
    </location>
</feature>
<feature type="modified residue" description="Phosphoserine; by autocatalysis" evidence="1">
    <location>
        <position position="173"/>
    </location>
</feature>
<feature type="sequence conflict" description="In Ref. 3; AAH50520." evidence="7" ref="3">
    <original>K</original>
    <variation>R</variation>
    <location>
        <position position="11"/>
    </location>
</feature>
<feature type="sequence conflict" description="In Ref. 3; AAH50520." evidence="7" ref="3">
    <original>V</original>
    <variation>A</variation>
    <location>
        <position position="265"/>
    </location>
</feature>
<feature type="sequence conflict" description="In Ref. 3; AAH50520." evidence="7" ref="3">
    <original>E</original>
    <variation>D</variation>
    <location>
        <position position="436"/>
    </location>
</feature>
<feature type="sequence conflict" description="In Ref. 1; BAC75706." evidence="7" ref="1">
    <original>SS</original>
    <variation>YN</variation>
    <location>
        <begin position="465"/>
        <end position="466"/>
    </location>
</feature>
<feature type="sequence conflict" description="In Ref. 1; BAC75706 and 3; AAH50520." evidence="7" ref="1 3">
    <original>I</original>
    <variation>M</variation>
    <location>
        <position position="519"/>
    </location>
</feature>
<feature type="sequence conflict" description="In Ref. 1; BAC75706." evidence="7" ref="1">
    <original>K</original>
    <variation>R</variation>
    <location>
        <position position="580"/>
    </location>
</feature>
<feature type="sequence conflict" description="In Ref. 3; AAH50520." evidence="7" ref="3">
    <original>L</original>
    <variation>P</variation>
    <location>
        <position position="663"/>
    </location>
</feature>
<proteinExistence type="evidence at transcript level"/>
<keyword id="KW-0053">Apoptosis</keyword>
<keyword id="KW-0067">ATP-binding</keyword>
<keyword id="KW-0131">Cell cycle</keyword>
<keyword id="KW-1003">Cell membrane</keyword>
<keyword id="KW-0418">Kinase</keyword>
<keyword id="KW-0446">Lipid-binding</keyword>
<keyword id="KW-0472">Membrane</keyword>
<keyword id="KW-0547">Nucleotide-binding</keyword>
<keyword id="KW-0597">Phosphoprotein</keyword>
<keyword id="KW-1185">Reference proteome</keyword>
<keyword id="KW-0723">Serine/threonine-protein kinase</keyword>
<keyword id="KW-0808">Transferase</keyword>
<comment type="function">
    <text evidence="1 6">Serine/threonine-protein kinase involved in various processes such as cell cycle regulation, self-renewal of stem cells, apoptosis and splicing regulation (By similarity). Also plays a role in primitive hematopoiesis, possibly by affecting the expression of genes critical for hematopoiesis.</text>
</comment>
<comment type="catalytic activity">
    <reaction>
        <text>L-seryl-[protein] + ATP = O-phospho-L-seryl-[protein] + ADP + H(+)</text>
        <dbReference type="Rhea" id="RHEA:17989"/>
        <dbReference type="Rhea" id="RHEA-COMP:9863"/>
        <dbReference type="Rhea" id="RHEA-COMP:11604"/>
        <dbReference type="ChEBI" id="CHEBI:15378"/>
        <dbReference type="ChEBI" id="CHEBI:29999"/>
        <dbReference type="ChEBI" id="CHEBI:30616"/>
        <dbReference type="ChEBI" id="CHEBI:83421"/>
        <dbReference type="ChEBI" id="CHEBI:456216"/>
        <dbReference type="EC" id="2.7.11.1"/>
    </reaction>
</comment>
<comment type="catalytic activity">
    <reaction>
        <text>L-threonyl-[protein] + ATP = O-phospho-L-threonyl-[protein] + ADP + H(+)</text>
        <dbReference type="Rhea" id="RHEA:46608"/>
        <dbReference type="Rhea" id="RHEA-COMP:11060"/>
        <dbReference type="Rhea" id="RHEA-COMP:11605"/>
        <dbReference type="ChEBI" id="CHEBI:15378"/>
        <dbReference type="ChEBI" id="CHEBI:30013"/>
        <dbReference type="ChEBI" id="CHEBI:30616"/>
        <dbReference type="ChEBI" id="CHEBI:61977"/>
        <dbReference type="ChEBI" id="CHEBI:456216"/>
        <dbReference type="EC" id="2.7.11.1"/>
    </reaction>
</comment>
<comment type="activity regulation">
    <text>Activated by autophosphorylation of the T-loop at Thr-169 and Ser-173: in contrast to other members of the SNF1 subfamily, phosphorylation at Thr-169 is not mediated by STK11/LKB1 but via autophosphorylation instead.</text>
</comment>
<comment type="subcellular location">
    <subcellularLocation>
        <location evidence="1">Cell membrane</location>
        <topology evidence="1">Peripheral membrane protein</topology>
    </subcellularLocation>
</comment>
<comment type="tissue specificity">
    <text evidence="6">Strongly expressed in the eye, gill, kidney, spleen, muscle, ovary and testis and weakly in the heart, liver, and gut. Expressed in the brain and lateral mesoderm at 12 hours post-fertilization (hpf).</text>
</comment>
<comment type="domain">
    <text evidence="1">The KA1 domain mediates binding to phospholipids and targeting to membranes.</text>
</comment>
<comment type="PTM">
    <text evidence="1">Autophosphorylated: autophosphorylation of the T-loop at Thr-169 and Ser-173 is required for activation.</text>
</comment>
<comment type="similarity">
    <text evidence="7">Belongs to the protein kinase superfamily. CAMK Ser/Thr protein kinase family. SNF1 subfamily.</text>
</comment>